<name>LECH_CHICK</name>
<protein>
    <recommendedName>
        <fullName>Hepatic lectin</fullName>
    </recommendedName>
</protein>
<organism>
    <name type="scientific">Gallus gallus</name>
    <name type="common">Chicken</name>
    <dbReference type="NCBI Taxonomy" id="9031"/>
    <lineage>
        <taxon>Eukaryota</taxon>
        <taxon>Metazoa</taxon>
        <taxon>Chordata</taxon>
        <taxon>Craniata</taxon>
        <taxon>Vertebrata</taxon>
        <taxon>Euteleostomi</taxon>
        <taxon>Archelosauria</taxon>
        <taxon>Archosauria</taxon>
        <taxon>Dinosauria</taxon>
        <taxon>Saurischia</taxon>
        <taxon>Theropoda</taxon>
        <taxon>Coelurosauria</taxon>
        <taxon>Aves</taxon>
        <taxon>Neognathae</taxon>
        <taxon>Galloanserae</taxon>
        <taxon>Galliformes</taxon>
        <taxon>Phasianidae</taxon>
        <taxon>Phasianinae</taxon>
        <taxon>Gallus</taxon>
    </lineage>
</organism>
<sequence>MDEERLSDNVRLYKGGSIRQGLRSFAAVYVLLALSFLLLTLLSSVSLARIAALSSKLSTLQSEPKHNFSSRDSLLFPCGAQSRQWEYFEGRCYYFSLSRMSWHKAKAECEEMHSHLIIIDSYAKQNFVMFRTRNERFWIGLTDENQEGEWQWVDGTDTRSSFTFWKEGEPNNRGFNEDCAHVWTSGQWNDVYCTYECYYVCEKPLPK</sequence>
<evidence type="ECO:0000255" key="1"/>
<evidence type="ECO:0000255" key="2">
    <source>
        <dbReference type="PROSITE-ProRule" id="PRU00040"/>
    </source>
</evidence>
<evidence type="ECO:0000269" key="3">
    <source>
    </source>
</evidence>
<keyword id="KW-0007">Acetylation</keyword>
<keyword id="KW-0903">Direct protein sequencing</keyword>
<keyword id="KW-1015">Disulfide bond</keyword>
<keyword id="KW-0254">Endocytosis</keyword>
<keyword id="KW-0325">Glycoprotein</keyword>
<keyword id="KW-0430">Lectin</keyword>
<keyword id="KW-0472">Membrane</keyword>
<keyword id="KW-0675">Receptor</keyword>
<keyword id="KW-1185">Reference proteome</keyword>
<keyword id="KW-0735">Signal-anchor</keyword>
<keyword id="KW-0812">Transmembrane</keyword>
<keyword id="KW-1133">Transmembrane helix</keyword>
<feature type="chain" id="PRO_0000046649" description="Hepatic lectin">
    <location>
        <begin position="1"/>
        <end position="207"/>
    </location>
</feature>
<feature type="topological domain" description="Cytoplasmic" evidence="1">
    <location>
        <begin position="1"/>
        <end position="23"/>
    </location>
</feature>
<feature type="transmembrane region" description="Helical; Signal-anchor for type II membrane protein" evidence="1">
    <location>
        <begin position="24"/>
        <end position="48"/>
    </location>
</feature>
<feature type="topological domain" description="Extracellular" evidence="1">
    <location>
        <begin position="49"/>
        <end position="207"/>
    </location>
</feature>
<feature type="domain" description="C-type lectin" evidence="2">
    <location>
        <begin position="77"/>
        <end position="203"/>
    </location>
</feature>
<feature type="modified residue" description="N-acetylmethionine" evidence="3">
    <location>
        <position position="1"/>
    </location>
</feature>
<feature type="glycosylation site" description="N-linked (GlcNAc...) asparagine" evidence="3">
    <location>
        <position position="67"/>
    </location>
</feature>
<feature type="disulfide bond" evidence="2">
    <location>
        <begin position="78"/>
        <end position="92"/>
    </location>
</feature>
<feature type="disulfide bond" evidence="2">
    <location>
        <begin position="109"/>
        <end position="201"/>
    </location>
</feature>
<feature type="disulfide bond" evidence="2">
    <location>
        <begin position="179"/>
        <end position="193"/>
    </location>
</feature>
<accession>P02707</accession>
<reference key="1">
    <citation type="journal article" date="1981" name="J. Biol. Chem.">
        <title>Complete amino acid sequence of a membrane receptor for glycoproteins. Sequence of the chicken hepatic lectin.</title>
        <authorList>
            <person name="Drickamer K."/>
        </authorList>
    </citation>
    <scope>PROTEIN SEQUENCE</scope>
    <scope>ACETYLATION AT MET-1</scope>
</reference>
<reference key="2">
    <citation type="journal article" date="1988" name="J. Biol. Chem.">
        <title>Endocytosis of N-acetylglucosamine-containing glycoproteins by rat fibroblasts expressing a single species of chicken liver glycoprotein receptor.</title>
        <authorList>
            <person name="Mellow T.E."/>
            <person name="Halberg D."/>
            <person name="Drickamer K."/>
        </authorList>
    </citation>
    <scope>NUCLEOTIDE SEQUENCE [MRNA]</scope>
</reference>
<reference key="3">
    <citation type="journal article" date="1991" name="J. Biol. Chem.">
        <title>Evolutionary conservation of intron position in a subfamily of genes encoding carbohydrate-recognition domains.</title>
        <authorList>
            <person name="Bezouska K."/>
            <person name="Crichlow G.V."/>
            <person name="Rose J.M."/>
            <person name="Taylor M.E."/>
            <person name="Drickamer K."/>
        </authorList>
    </citation>
    <scope>NUCLEOTIDE SEQUENCE [GENOMIC DNA]</scope>
</reference>
<dbReference type="EMBL" id="J03188">
    <property type="protein sequence ID" value="AAA48937.1"/>
    <property type="molecule type" value="mRNA"/>
</dbReference>
<dbReference type="EMBL" id="M63230">
    <property type="protein sequence ID" value="AAA48814.1"/>
    <property type="molecule type" value="Genomic_DNA"/>
</dbReference>
<dbReference type="EMBL" id="M63225">
    <property type="protein sequence ID" value="AAA48814.1"/>
    <property type="status" value="JOINED"/>
    <property type="molecule type" value="Genomic_DNA"/>
</dbReference>
<dbReference type="EMBL" id="M63226">
    <property type="protein sequence ID" value="AAA48814.1"/>
    <property type="status" value="JOINED"/>
    <property type="molecule type" value="Genomic_DNA"/>
</dbReference>
<dbReference type="EMBL" id="M63227">
    <property type="protein sequence ID" value="AAA48814.1"/>
    <property type="status" value="JOINED"/>
    <property type="molecule type" value="Genomic_DNA"/>
</dbReference>
<dbReference type="EMBL" id="M63228">
    <property type="protein sequence ID" value="AAA48814.1"/>
    <property type="status" value="JOINED"/>
    <property type="molecule type" value="Genomic_DNA"/>
</dbReference>
<dbReference type="EMBL" id="M63229">
    <property type="protein sequence ID" value="AAA48814.1"/>
    <property type="status" value="JOINED"/>
    <property type="molecule type" value="Genomic_DNA"/>
</dbReference>
<dbReference type="PIR" id="A03167">
    <property type="entry name" value="LNCHL"/>
</dbReference>
<dbReference type="RefSeq" id="NP_990815.1">
    <property type="nucleotide sequence ID" value="NM_205484.2"/>
</dbReference>
<dbReference type="SMR" id="P02707"/>
<dbReference type="FunCoup" id="P02707">
    <property type="interactions" value="138"/>
</dbReference>
<dbReference type="STRING" id="9031.ENSGALP00000048786"/>
<dbReference type="MEROPS" id="I63.002"/>
<dbReference type="GlyGen" id="P02707">
    <property type="glycosylation" value="1 site"/>
</dbReference>
<dbReference type="iPTMnet" id="P02707"/>
<dbReference type="PaxDb" id="9031-ENSGALP00000042048"/>
<dbReference type="GeneID" id="396477"/>
<dbReference type="KEGG" id="gga:396477"/>
<dbReference type="VEuPathDB" id="HostDB:LOC396477"/>
<dbReference type="HOGENOM" id="CLU_2694088_0_0_1"/>
<dbReference type="InParanoid" id="P02707"/>
<dbReference type="OMA" id="QVIWHTA"/>
<dbReference type="OrthoDB" id="2142683at2759"/>
<dbReference type="PhylomeDB" id="P02707"/>
<dbReference type="Reactome" id="R-GGA-1236978">
    <property type="pathway name" value="Cross-presentation of soluble exogenous antigens (endosomes)"/>
</dbReference>
<dbReference type="Reactome" id="R-GGA-446203">
    <property type="pathway name" value="Asparagine N-linked glycosylation"/>
</dbReference>
<dbReference type="Reactome" id="R-GGA-5621480">
    <property type="pathway name" value="Dectin-2 family"/>
</dbReference>
<dbReference type="Reactome" id="R-GGA-8851680">
    <property type="pathway name" value="Butyrophilin (BTN) family interactions"/>
</dbReference>
<dbReference type="PRO" id="PR:P02707"/>
<dbReference type="Proteomes" id="UP000000539">
    <property type="component" value="Chromosome 30"/>
</dbReference>
<dbReference type="Bgee" id="ENSGALG00000037253">
    <property type="expression patterns" value="Expressed in liver and 7 other cell types or tissues"/>
</dbReference>
<dbReference type="GO" id="GO:0009897">
    <property type="term" value="C:external side of plasma membrane"/>
    <property type="evidence" value="ECO:0000318"/>
    <property type="project" value="GO_Central"/>
</dbReference>
<dbReference type="GO" id="GO:0030246">
    <property type="term" value="F:carbohydrate binding"/>
    <property type="evidence" value="ECO:0000318"/>
    <property type="project" value="GO_Central"/>
</dbReference>
<dbReference type="GO" id="GO:0038187">
    <property type="term" value="F:pattern recognition receptor activity"/>
    <property type="evidence" value="ECO:0000318"/>
    <property type="project" value="GO_Central"/>
</dbReference>
<dbReference type="GO" id="GO:0006897">
    <property type="term" value="P:endocytosis"/>
    <property type="evidence" value="ECO:0007669"/>
    <property type="project" value="UniProtKB-KW"/>
</dbReference>
<dbReference type="GO" id="GO:0006955">
    <property type="term" value="P:immune response"/>
    <property type="evidence" value="ECO:0000318"/>
    <property type="project" value="GO_Central"/>
</dbReference>
<dbReference type="CDD" id="cd03590">
    <property type="entry name" value="CLECT_DC-SIGN_like"/>
    <property type="match status" value="1"/>
</dbReference>
<dbReference type="Gene3D" id="3.10.100.10">
    <property type="entry name" value="Mannose-Binding Protein A, subunit A"/>
    <property type="match status" value="1"/>
</dbReference>
<dbReference type="InterPro" id="IPR001304">
    <property type="entry name" value="C-type_lectin-like"/>
</dbReference>
<dbReference type="InterPro" id="IPR016186">
    <property type="entry name" value="C-type_lectin-like/link_sf"/>
</dbReference>
<dbReference type="InterPro" id="IPR050111">
    <property type="entry name" value="C-type_lectin/snaclec_domain"/>
</dbReference>
<dbReference type="InterPro" id="IPR018378">
    <property type="entry name" value="C-type_lectin_CS"/>
</dbReference>
<dbReference type="InterPro" id="IPR033989">
    <property type="entry name" value="CD209-like_CTLD"/>
</dbReference>
<dbReference type="InterPro" id="IPR016187">
    <property type="entry name" value="CTDL_fold"/>
</dbReference>
<dbReference type="PANTHER" id="PTHR22803">
    <property type="entry name" value="MANNOSE, PHOSPHOLIPASE, LECTIN RECEPTOR RELATED"/>
    <property type="match status" value="1"/>
</dbReference>
<dbReference type="Pfam" id="PF00059">
    <property type="entry name" value="Lectin_C"/>
    <property type="match status" value="1"/>
</dbReference>
<dbReference type="SMART" id="SM00034">
    <property type="entry name" value="CLECT"/>
    <property type="match status" value="1"/>
</dbReference>
<dbReference type="SUPFAM" id="SSF56436">
    <property type="entry name" value="C-type lectin-like"/>
    <property type="match status" value="1"/>
</dbReference>
<dbReference type="PROSITE" id="PS00615">
    <property type="entry name" value="C_TYPE_LECTIN_1"/>
    <property type="match status" value="1"/>
</dbReference>
<dbReference type="PROSITE" id="PS50041">
    <property type="entry name" value="C_TYPE_LECTIN_2"/>
    <property type="match status" value="1"/>
</dbReference>
<proteinExistence type="evidence at protein level"/>
<comment type="function">
    <text>Hepatic lectin is a membrane receptor protein that recognizes and binds exposed N-acetylglucosamine moieties of plasma glycoproteins, thus mediating their clearance (from the circulation) and endocytosis.</text>
</comment>
<comment type="subcellular location">
    <subcellularLocation>
        <location>Membrane</location>
        <topology>Single-pass type II membrane protein</topology>
    </subcellularLocation>
</comment>
<comment type="PTM">
    <text>Some or all of the cysteines are involved in disulfide bonds.</text>
</comment>